<dbReference type="EC" id="2.7.2.8" evidence="1"/>
<dbReference type="EMBL" id="AE000782">
    <property type="protein sequence ID" value="AAB89966.1"/>
    <property type="molecule type" value="Genomic_DNA"/>
</dbReference>
<dbReference type="PIR" id="G69409">
    <property type="entry name" value="G69409"/>
</dbReference>
<dbReference type="RefSeq" id="WP_010878775.1">
    <property type="nucleotide sequence ID" value="NC_000917.1"/>
</dbReference>
<dbReference type="SMR" id="O28988"/>
<dbReference type="STRING" id="224325.AF_1280"/>
<dbReference type="PaxDb" id="224325-AF_1280"/>
<dbReference type="EnsemblBacteria" id="AAB89966">
    <property type="protein sequence ID" value="AAB89966"/>
    <property type="gene ID" value="AF_1280"/>
</dbReference>
<dbReference type="GeneID" id="24794891"/>
<dbReference type="KEGG" id="afu:AF_1280"/>
<dbReference type="eggNOG" id="arCOG00862">
    <property type="taxonomic scope" value="Archaea"/>
</dbReference>
<dbReference type="HOGENOM" id="CLU_053680_0_0_2"/>
<dbReference type="OrthoDB" id="6816at2157"/>
<dbReference type="PhylomeDB" id="O28988"/>
<dbReference type="UniPathway" id="UPA00068">
    <property type="reaction ID" value="UER00107"/>
</dbReference>
<dbReference type="Proteomes" id="UP000002199">
    <property type="component" value="Chromosome"/>
</dbReference>
<dbReference type="GO" id="GO:0005737">
    <property type="term" value="C:cytoplasm"/>
    <property type="evidence" value="ECO:0007669"/>
    <property type="project" value="UniProtKB-SubCell"/>
</dbReference>
<dbReference type="GO" id="GO:0003991">
    <property type="term" value="F:acetylglutamate kinase activity"/>
    <property type="evidence" value="ECO:0007669"/>
    <property type="project" value="UniProtKB-UniRule"/>
</dbReference>
<dbReference type="GO" id="GO:0005524">
    <property type="term" value="F:ATP binding"/>
    <property type="evidence" value="ECO:0007669"/>
    <property type="project" value="UniProtKB-UniRule"/>
</dbReference>
<dbReference type="GO" id="GO:0042450">
    <property type="term" value="P:arginine biosynthetic process via ornithine"/>
    <property type="evidence" value="ECO:0007669"/>
    <property type="project" value="UniProtKB-UniRule"/>
</dbReference>
<dbReference type="GO" id="GO:0006526">
    <property type="term" value="P:L-arginine biosynthetic process"/>
    <property type="evidence" value="ECO:0007669"/>
    <property type="project" value="UniProtKB-UniPathway"/>
</dbReference>
<dbReference type="CDD" id="cd04250">
    <property type="entry name" value="AAK_NAGK-C"/>
    <property type="match status" value="1"/>
</dbReference>
<dbReference type="FunFam" id="3.40.1160.10:FF:000004">
    <property type="entry name" value="Acetylglutamate kinase"/>
    <property type="match status" value="1"/>
</dbReference>
<dbReference type="Gene3D" id="3.40.1160.10">
    <property type="entry name" value="Acetylglutamate kinase-like"/>
    <property type="match status" value="1"/>
</dbReference>
<dbReference type="HAMAP" id="MF_00082">
    <property type="entry name" value="ArgB"/>
    <property type="match status" value="1"/>
</dbReference>
<dbReference type="InterPro" id="IPR036393">
    <property type="entry name" value="AceGlu_kinase-like_sf"/>
</dbReference>
<dbReference type="InterPro" id="IPR004662">
    <property type="entry name" value="AcgluKinase_fam"/>
</dbReference>
<dbReference type="InterPro" id="IPR037528">
    <property type="entry name" value="ArgB"/>
</dbReference>
<dbReference type="InterPro" id="IPR001048">
    <property type="entry name" value="Asp/Glu/Uridylate_kinase"/>
</dbReference>
<dbReference type="InterPro" id="IPR041727">
    <property type="entry name" value="NAGK-C"/>
</dbReference>
<dbReference type="NCBIfam" id="TIGR00761">
    <property type="entry name" value="argB"/>
    <property type="match status" value="1"/>
</dbReference>
<dbReference type="PANTHER" id="PTHR23342">
    <property type="entry name" value="N-ACETYLGLUTAMATE SYNTHASE"/>
    <property type="match status" value="1"/>
</dbReference>
<dbReference type="PANTHER" id="PTHR23342:SF0">
    <property type="entry name" value="N-ACETYLGLUTAMATE SYNTHASE, MITOCHONDRIAL"/>
    <property type="match status" value="1"/>
</dbReference>
<dbReference type="Pfam" id="PF00696">
    <property type="entry name" value="AA_kinase"/>
    <property type="match status" value="1"/>
</dbReference>
<dbReference type="PIRSF" id="PIRSF000728">
    <property type="entry name" value="NAGK"/>
    <property type="match status" value="1"/>
</dbReference>
<dbReference type="SUPFAM" id="SSF53633">
    <property type="entry name" value="Carbamate kinase-like"/>
    <property type="match status" value="1"/>
</dbReference>
<organism>
    <name type="scientific">Archaeoglobus fulgidus (strain ATCC 49558 / DSM 4304 / JCM 9628 / NBRC 100126 / VC-16)</name>
    <dbReference type="NCBI Taxonomy" id="224325"/>
    <lineage>
        <taxon>Archaea</taxon>
        <taxon>Methanobacteriati</taxon>
        <taxon>Methanobacteriota</taxon>
        <taxon>Archaeoglobi</taxon>
        <taxon>Archaeoglobales</taxon>
        <taxon>Archaeoglobaceae</taxon>
        <taxon>Archaeoglobus</taxon>
    </lineage>
</organism>
<proteinExistence type="inferred from homology"/>
<reference key="1">
    <citation type="journal article" date="1997" name="Nature">
        <title>The complete genome sequence of the hyperthermophilic, sulphate-reducing archaeon Archaeoglobus fulgidus.</title>
        <authorList>
            <person name="Klenk H.-P."/>
            <person name="Clayton R.A."/>
            <person name="Tomb J.-F."/>
            <person name="White O."/>
            <person name="Nelson K.E."/>
            <person name="Ketchum K.A."/>
            <person name="Dodson R.J."/>
            <person name="Gwinn M.L."/>
            <person name="Hickey E.K."/>
            <person name="Peterson J.D."/>
            <person name="Richardson D.L."/>
            <person name="Kerlavage A.R."/>
            <person name="Graham D.E."/>
            <person name="Kyrpides N.C."/>
            <person name="Fleischmann R.D."/>
            <person name="Quackenbush J."/>
            <person name="Lee N.H."/>
            <person name="Sutton G.G."/>
            <person name="Gill S.R."/>
            <person name="Kirkness E.F."/>
            <person name="Dougherty B.A."/>
            <person name="McKenney K."/>
            <person name="Adams M.D."/>
            <person name="Loftus B.J."/>
            <person name="Peterson S.N."/>
            <person name="Reich C.I."/>
            <person name="McNeil L.K."/>
            <person name="Badger J.H."/>
            <person name="Glodek A."/>
            <person name="Zhou L."/>
            <person name="Overbeek R."/>
            <person name="Gocayne J.D."/>
            <person name="Weidman J.F."/>
            <person name="McDonald L.A."/>
            <person name="Utterback T.R."/>
            <person name="Cotton M.D."/>
            <person name="Spriggs T."/>
            <person name="Artiach P."/>
            <person name="Kaine B.P."/>
            <person name="Sykes S.M."/>
            <person name="Sadow P.W."/>
            <person name="D'Andrea K.P."/>
            <person name="Bowman C."/>
            <person name="Fujii C."/>
            <person name="Garland S.A."/>
            <person name="Mason T.M."/>
            <person name="Olsen G.J."/>
            <person name="Fraser C.M."/>
            <person name="Smith H.O."/>
            <person name="Woese C.R."/>
            <person name="Venter J.C."/>
        </authorList>
    </citation>
    <scope>NUCLEOTIDE SEQUENCE [LARGE SCALE GENOMIC DNA]</scope>
    <source>
        <strain>ATCC 49558 / DSM 4304 / JCM 9628 / NBRC 100126 / VC-16</strain>
    </source>
</reference>
<feature type="chain" id="PRO_0000112692" description="Acetylglutamate kinase">
    <location>
        <begin position="1"/>
        <end position="290"/>
    </location>
</feature>
<feature type="binding site" evidence="1">
    <location>
        <begin position="60"/>
        <end position="61"/>
    </location>
    <ligand>
        <name>substrate</name>
    </ligand>
</feature>
<feature type="binding site" evidence="1">
    <location>
        <position position="82"/>
    </location>
    <ligand>
        <name>substrate</name>
    </ligand>
</feature>
<feature type="binding site" evidence="1">
    <location>
        <position position="185"/>
    </location>
    <ligand>
        <name>substrate</name>
    </ligand>
</feature>
<feature type="site" description="Transition state stabilizer" evidence="1">
    <location>
        <position position="25"/>
    </location>
</feature>
<feature type="site" description="Transition state stabilizer" evidence="1">
    <location>
        <position position="248"/>
    </location>
</feature>
<gene>
    <name evidence="1" type="primary">argB</name>
    <name type="ordered locus">AF_1280</name>
</gene>
<name>ARGB_ARCFU</name>
<comment type="function">
    <text evidence="1">Catalyzes the ATP-dependent phosphorylation of N-acetyl-L-glutamate.</text>
</comment>
<comment type="catalytic activity">
    <reaction evidence="1">
        <text>N-acetyl-L-glutamate + ATP = N-acetyl-L-glutamyl 5-phosphate + ADP</text>
        <dbReference type="Rhea" id="RHEA:14629"/>
        <dbReference type="ChEBI" id="CHEBI:30616"/>
        <dbReference type="ChEBI" id="CHEBI:44337"/>
        <dbReference type="ChEBI" id="CHEBI:57936"/>
        <dbReference type="ChEBI" id="CHEBI:456216"/>
        <dbReference type="EC" id="2.7.2.8"/>
    </reaction>
</comment>
<comment type="pathway">
    <text evidence="1">Amino-acid biosynthesis; L-arginine biosynthesis; N(2)-acetyl-L-ornithine from L-glutamate: step 2/4.</text>
</comment>
<comment type="subcellular location">
    <subcellularLocation>
        <location evidence="1">Cytoplasm</location>
    </subcellularLocation>
</comment>
<comment type="similarity">
    <text evidence="1">Belongs to the acetylglutamate kinase family. ArgB subfamily.</text>
</comment>
<sequence length="290" mass="31664">MENVELLIEALPYIKDFHSTTMVIKIGGHAMVNDRILEDTIKDIVLLYFVGIKPVVVHGGGPEISEKMEKFGLKPKFVEGLRVTDKETMEVVEMVLDGKVNSKIVTTFIRNGGKAVGLSGKDGLLIVARKKEMRMKKGEEEVIIDLGFVGETEFVNPEIIRILLDNGFIPVVSPVATDLAGNTYNLNADVVAGDIAAALKAKKLIMLTDVPGILENPDDKSTLISRIRLSELENMRSKGVIRGGMIPKVDAVIKALKSGVERAHIIDGSRPHSILIELFTKEGIGTMVEP</sequence>
<evidence type="ECO:0000255" key="1">
    <source>
        <dbReference type="HAMAP-Rule" id="MF_00082"/>
    </source>
</evidence>
<keyword id="KW-0028">Amino-acid biosynthesis</keyword>
<keyword id="KW-0055">Arginine biosynthesis</keyword>
<keyword id="KW-0067">ATP-binding</keyword>
<keyword id="KW-0963">Cytoplasm</keyword>
<keyword id="KW-0418">Kinase</keyword>
<keyword id="KW-0547">Nucleotide-binding</keyword>
<keyword id="KW-1185">Reference proteome</keyword>
<keyword id="KW-0808">Transferase</keyword>
<accession>O28988</accession>
<protein>
    <recommendedName>
        <fullName evidence="1">Acetylglutamate kinase</fullName>
        <ecNumber evidence="1">2.7.2.8</ecNumber>
    </recommendedName>
    <alternativeName>
        <fullName evidence="1">N-acetyl-L-glutamate 5-phosphotransferase</fullName>
    </alternativeName>
    <alternativeName>
        <fullName evidence="1">NAG kinase</fullName>
        <shortName evidence="1">NAGK</shortName>
    </alternativeName>
</protein>